<keyword id="KW-0378">Hydrolase</keyword>
<keyword id="KW-0408">Iron</keyword>
<keyword id="KW-0479">Metal-binding</keyword>
<keyword id="KW-0648">Protein biosynthesis</keyword>
<feature type="chain" id="PRO_0000301078" description="Peptide deformylase">
    <location>
        <begin position="1"/>
        <end position="201"/>
    </location>
</feature>
<feature type="region of interest" description="Disordered" evidence="2">
    <location>
        <begin position="1"/>
        <end position="24"/>
    </location>
</feature>
<feature type="active site" evidence="1">
    <location>
        <position position="164"/>
    </location>
</feature>
<feature type="binding site" evidence="1">
    <location>
        <position position="121"/>
    </location>
    <ligand>
        <name>Fe cation</name>
        <dbReference type="ChEBI" id="CHEBI:24875"/>
    </ligand>
</feature>
<feature type="binding site" evidence="1">
    <location>
        <position position="163"/>
    </location>
    <ligand>
        <name>Fe cation</name>
        <dbReference type="ChEBI" id="CHEBI:24875"/>
    </ligand>
</feature>
<feature type="binding site" evidence="1">
    <location>
        <position position="167"/>
    </location>
    <ligand>
        <name>Fe cation</name>
        <dbReference type="ChEBI" id="CHEBI:24875"/>
    </ligand>
</feature>
<gene>
    <name evidence="1" type="primary">def</name>
    <name type="ordered locus">PMT9312_0070</name>
</gene>
<protein>
    <recommendedName>
        <fullName evidence="1">Peptide deformylase</fullName>
        <shortName evidence="1">PDF</shortName>
        <ecNumber evidence="1">3.5.1.88</ecNumber>
    </recommendedName>
    <alternativeName>
        <fullName evidence="1">Polypeptide deformylase</fullName>
    </alternativeName>
</protein>
<organism>
    <name type="scientific">Prochlorococcus marinus (strain MIT 9312)</name>
    <dbReference type="NCBI Taxonomy" id="74546"/>
    <lineage>
        <taxon>Bacteria</taxon>
        <taxon>Bacillati</taxon>
        <taxon>Cyanobacteriota</taxon>
        <taxon>Cyanophyceae</taxon>
        <taxon>Synechococcales</taxon>
        <taxon>Prochlorococcaceae</taxon>
        <taxon>Prochlorococcus</taxon>
    </lineage>
</organism>
<reference key="1">
    <citation type="journal article" date="2006" name="Science">
        <title>Genomic islands and the ecology and evolution of Prochlorococcus.</title>
        <authorList>
            <person name="Coleman M.L."/>
            <person name="Sullivan M.B."/>
            <person name="Martiny A.C."/>
            <person name="Steglich C."/>
            <person name="Barry K."/>
            <person name="Delong E.F."/>
            <person name="Chisholm S.W."/>
        </authorList>
    </citation>
    <scope>NUCLEOTIDE SEQUENCE [LARGE SCALE GENOMIC DNA]</scope>
    <source>
        <strain>MIT 9312</strain>
    </source>
</reference>
<evidence type="ECO:0000255" key="1">
    <source>
        <dbReference type="HAMAP-Rule" id="MF_00163"/>
    </source>
</evidence>
<evidence type="ECO:0000256" key="2">
    <source>
        <dbReference type="SAM" id="MobiDB-lite"/>
    </source>
</evidence>
<proteinExistence type="inferred from homology"/>
<name>DEF_PROM9</name>
<accession>Q31DB4</accession>
<comment type="function">
    <text evidence="1">Removes the formyl group from the N-terminal Met of newly synthesized proteins. Requires at least a dipeptide for an efficient rate of reaction. N-terminal L-methionine is a prerequisite for activity but the enzyme has broad specificity at other positions.</text>
</comment>
<comment type="catalytic activity">
    <reaction evidence="1">
        <text>N-terminal N-formyl-L-methionyl-[peptide] + H2O = N-terminal L-methionyl-[peptide] + formate</text>
        <dbReference type="Rhea" id="RHEA:24420"/>
        <dbReference type="Rhea" id="RHEA-COMP:10639"/>
        <dbReference type="Rhea" id="RHEA-COMP:10640"/>
        <dbReference type="ChEBI" id="CHEBI:15377"/>
        <dbReference type="ChEBI" id="CHEBI:15740"/>
        <dbReference type="ChEBI" id="CHEBI:49298"/>
        <dbReference type="ChEBI" id="CHEBI:64731"/>
        <dbReference type="EC" id="3.5.1.88"/>
    </reaction>
</comment>
<comment type="cofactor">
    <cofactor evidence="1">
        <name>Fe(2+)</name>
        <dbReference type="ChEBI" id="CHEBI:29033"/>
    </cofactor>
    <text evidence="1">Binds 1 Fe(2+) ion.</text>
</comment>
<comment type="similarity">
    <text evidence="1">Belongs to the polypeptide deformylase family.</text>
</comment>
<dbReference type="EC" id="3.5.1.88" evidence="1"/>
<dbReference type="EMBL" id="CP000111">
    <property type="protein sequence ID" value="ABB49131.1"/>
    <property type="molecule type" value="Genomic_DNA"/>
</dbReference>
<dbReference type="RefSeq" id="WP_011375634.1">
    <property type="nucleotide sequence ID" value="NC_007577.1"/>
</dbReference>
<dbReference type="SMR" id="Q31DB4"/>
<dbReference type="STRING" id="74546.PMT9312_0070"/>
<dbReference type="KEGG" id="pmi:PMT9312_0070"/>
<dbReference type="eggNOG" id="COG0242">
    <property type="taxonomic scope" value="Bacteria"/>
</dbReference>
<dbReference type="HOGENOM" id="CLU_061901_4_2_3"/>
<dbReference type="OrthoDB" id="9784988at2"/>
<dbReference type="Proteomes" id="UP000002715">
    <property type="component" value="Chromosome"/>
</dbReference>
<dbReference type="GO" id="GO:0046872">
    <property type="term" value="F:metal ion binding"/>
    <property type="evidence" value="ECO:0007669"/>
    <property type="project" value="UniProtKB-KW"/>
</dbReference>
<dbReference type="GO" id="GO:0042586">
    <property type="term" value="F:peptide deformylase activity"/>
    <property type="evidence" value="ECO:0007669"/>
    <property type="project" value="UniProtKB-UniRule"/>
</dbReference>
<dbReference type="GO" id="GO:0043686">
    <property type="term" value="P:co-translational protein modification"/>
    <property type="evidence" value="ECO:0007669"/>
    <property type="project" value="TreeGrafter"/>
</dbReference>
<dbReference type="GO" id="GO:0006412">
    <property type="term" value="P:translation"/>
    <property type="evidence" value="ECO:0007669"/>
    <property type="project" value="UniProtKB-UniRule"/>
</dbReference>
<dbReference type="CDD" id="cd00487">
    <property type="entry name" value="Pep_deformylase"/>
    <property type="match status" value="1"/>
</dbReference>
<dbReference type="FunFam" id="3.90.45.10:FF:000005">
    <property type="entry name" value="Peptide deformylase"/>
    <property type="match status" value="1"/>
</dbReference>
<dbReference type="Gene3D" id="3.90.45.10">
    <property type="entry name" value="Peptide deformylase"/>
    <property type="match status" value="1"/>
</dbReference>
<dbReference type="HAMAP" id="MF_00163">
    <property type="entry name" value="Pep_deformylase"/>
    <property type="match status" value="1"/>
</dbReference>
<dbReference type="InterPro" id="IPR023635">
    <property type="entry name" value="Peptide_deformylase"/>
</dbReference>
<dbReference type="InterPro" id="IPR036821">
    <property type="entry name" value="Peptide_deformylase_sf"/>
</dbReference>
<dbReference type="NCBIfam" id="TIGR00079">
    <property type="entry name" value="pept_deformyl"/>
    <property type="match status" value="1"/>
</dbReference>
<dbReference type="NCBIfam" id="NF001159">
    <property type="entry name" value="PRK00150.1-3"/>
    <property type="match status" value="1"/>
</dbReference>
<dbReference type="PANTHER" id="PTHR10458">
    <property type="entry name" value="PEPTIDE DEFORMYLASE"/>
    <property type="match status" value="1"/>
</dbReference>
<dbReference type="PANTHER" id="PTHR10458:SF22">
    <property type="entry name" value="PEPTIDE DEFORMYLASE"/>
    <property type="match status" value="1"/>
</dbReference>
<dbReference type="Pfam" id="PF01327">
    <property type="entry name" value="Pep_deformylase"/>
    <property type="match status" value="1"/>
</dbReference>
<dbReference type="PIRSF" id="PIRSF004749">
    <property type="entry name" value="Pep_def"/>
    <property type="match status" value="1"/>
</dbReference>
<dbReference type="PRINTS" id="PR01576">
    <property type="entry name" value="PDEFORMYLASE"/>
</dbReference>
<dbReference type="SUPFAM" id="SSF56420">
    <property type="entry name" value="Peptide deformylase"/>
    <property type="match status" value="1"/>
</dbReference>
<sequence>MANHFSQLAKKSKTNGNSEKIAKEQTGKPSLEIYKLGDDVLRQNSKRITKVDESIRKLTREMIQSMYAAKGIGLAAPQIGINKELLVIDVNFEDSAAEPLILINPEITDYGTTLNSYEEGCLSIPGVYLNVVRPSTIKLKFRDEMGRPRKMKADGLLARCIQHEMDHLNGILFVDRVTSKDDLKKELIKEGFHEKDVISIT</sequence>